<accession>Q89AZ8</accession>
<gene>
    <name type="primary">fliH</name>
    <name type="ordered locus">bbp_070</name>
</gene>
<name>FLIH_BUCBP</name>
<organism>
    <name type="scientific">Buchnera aphidicola subsp. Baizongia pistaciae (strain Bp)</name>
    <dbReference type="NCBI Taxonomy" id="224915"/>
    <lineage>
        <taxon>Bacteria</taxon>
        <taxon>Pseudomonadati</taxon>
        <taxon>Pseudomonadota</taxon>
        <taxon>Gammaproteobacteria</taxon>
        <taxon>Enterobacterales</taxon>
        <taxon>Erwiniaceae</taxon>
        <taxon>Buchnera</taxon>
    </lineage>
</organism>
<keyword id="KW-1005">Bacterial flagellum biogenesis</keyword>
<keyword id="KW-1006">Bacterial flagellum protein export</keyword>
<keyword id="KW-0963">Cytoplasm</keyword>
<keyword id="KW-0653">Protein transport</keyword>
<keyword id="KW-1185">Reference proteome</keyword>
<keyword id="KW-0813">Transport</keyword>
<comment type="function">
    <text evidence="1">Needed for flagellar regrowth and assembly.</text>
</comment>
<comment type="subcellular location">
    <subcellularLocation>
        <location evidence="2">Cytoplasm</location>
    </subcellularLocation>
</comment>
<comment type="similarity">
    <text evidence="2">Belongs to the FliH family.</text>
</comment>
<feature type="chain" id="PRO_0000180892" description="Flagellar assembly protein FliH">
    <location>
        <begin position="1"/>
        <end position="225"/>
    </location>
</feature>
<dbReference type="EMBL" id="AE016826">
    <property type="protein sequence ID" value="AAO26806.1"/>
    <property type="molecule type" value="Genomic_DNA"/>
</dbReference>
<dbReference type="RefSeq" id="WP_011091207.1">
    <property type="nucleotide sequence ID" value="NC_004545.1"/>
</dbReference>
<dbReference type="SMR" id="Q89AZ8"/>
<dbReference type="STRING" id="224915.bbp_070"/>
<dbReference type="KEGG" id="bab:bbp_070"/>
<dbReference type="eggNOG" id="COG1317">
    <property type="taxonomic scope" value="Bacteria"/>
</dbReference>
<dbReference type="HOGENOM" id="CLU_1227996_0_0_6"/>
<dbReference type="OrthoDB" id="6415116at2"/>
<dbReference type="Proteomes" id="UP000000601">
    <property type="component" value="Chromosome"/>
</dbReference>
<dbReference type="GO" id="GO:0009288">
    <property type="term" value="C:bacterial-type flagellum"/>
    <property type="evidence" value="ECO:0007669"/>
    <property type="project" value="InterPro"/>
</dbReference>
<dbReference type="GO" id="GO:0005829">
    <property type="term" value="C:cytosol"/>
    <property type="evidence" value="ECO:0007669"/>
    <property type="project" value="TreeGrafter"/>
</dbReference>
<dbReference type="GO" id="GO:0003774">
    <property type="term" value="F:cytoskeletal motor activity"/>
    <property type="evidence" value="ECO:0007669"/>
    <property type="project" value="InterPro"/>
</dbReference>
<dbReference type="GO" id="GO:0044781">
    <property type="term" value="P:bacterial-type flagellum organization"/>
    <property type="evidence" value="ECO:0007669"/>
    <property type="project" value="UniProtKB-KW"/>
</dbReference>
<dbReference type="GO" id="GO:0071973">
    <property type="term" value="P:bacterial-type flagellum-dependent cell motility"/>
    <property type="evidence" value="ECO:0007669"/>
    <property type="project" value="InterPro"/>
</dbReference>
<dbReference type="GO" id="GO:0015031">
    <property type="term" value="P:protein transport"/>
    <property type="evidence" value="ECO:0007669"/>
    <property type="project" value="UniProtKB-KW"/>
</dbReference>
<dbReference type="InterPro" id="IPR000563">
    <property type="entry name" value="Flag_FliH"/>
</dbReference>
<dbReference type="InterPro" id="IPR018035">
    <property type="entry name" value="Flagellar_FliH/T3SS_HrpE"/>
</dbReference>
<dbReference type="InterPro" id="IPR051472">
    <property type="entry name" value="T3SS_Stator/FliH"/>
</dbReference>
<dbReference type="PANTHER" id="PTHR34982:SF1">
    <property type="entry name" value="FLAGELLAR ASSEMBLY PROTEIN FLIH"/>
    <property type="match status" value="1"/>
</dbReference>
<dbReference type="PANTHER" id="PTHR34982">
    <property type="entry name" value="YOP PROTEINS TRANSLOCATION PROTEIN L"/>
    <property type="match status" value="1"/>
</dbReference>
<dbReference type="Pfam" id="PF02108">
    <property type="entry name" value="FliH"/>
    <property type="match status" value="1"/>
</dbReference>
<dbReference type="PRINTS" id="PR01003">
    <property type="entry name" value="FLGFLIH"/>
</dbReference>
<evidence type="ECO:0000250" key="1"/>
<evidence type="ECO:0000305" key="2"/>
<reference key="1">
    <citation type="journal article" date="2003" name="Proc. Natl. Acad. Sci. U.S.A.">
        <title>Reductive genome evolution in Buchnera aphidicola.</title>
        <authorList>
            <person name="van Ham R.C.H.J."/>
            <person name="Kamerbeek J."/>
            <person name="Palacios C."/>
            <person name="Rausell C."/>
            <person name="Abascal F."/>
            <person name="Bastolla U."/>
            <person name="Fernandez J.M."/>
            <person name="Jimenez L."/>
            <person name="Postigo M."/>
            <person name="Silva F.J."/>
            <person name="Tamames J."/>
            <person name="Viguera E."/>
            <person name="Latorre A."/>
            <person name="Valencia A."/>
            <person name="Moran F."/>
            <person name="Moya A."/>
        </authorList>
    </citation>
    <scope>NUCLEOTIDE SEQUENCE [LARGE SCALE GENOMIC DNA]</scope>
    <source>
        <strain>Bp</strain>
    </source>
</reference>
<protein>
    <recommendedName>
        <fullName>Flagellar assembly protein FliH</fullName>
    </recommendedName>
</protein>
<proteinExistence type="inferred from homology"/>
<sequence length="225" mass="26229">MSKNFLNKAWEKWNPGEIDTTTNITHNNFKKSDQVSNFSNTFTAEQNNDNLNNIKKNGYEDGFKRGKKEGFEAGFKKSFAEFEKKNREILNKMEDFLSNFRQSLSLFDEKVSSKIINTVLKISKKVLETTTLANDDSSFLKKIETIFQDRMFSLENPKLFISPNNQLLVKKYFGKIFSQYGWTICYNHYIPSGEFIISSGDTILDSTSSTRWNKLCKLVYFQEKQ</sequence>